<proteinExistence type="inferred from homology"/>
<gene>
    <name evidence="1" type="primary">pyrE</name>
    <name type="ordered locus">CLD_1296</name>
</gene>
<sequence length="191" mass="21240">MSNINVIDILKESDALLEGHFLLSSGRHSNRYCQCAKLLQCPQKAEKVISVIAEKLKEVDFNIIVGPAMGGVIVSYELARQTNKPGIFAERKEGVMCIRRGFEIKKGDKVIISEDVVTTGKSSLEVAKVIEEMGGEVVGIACIVDRRAEDIKTNYPIYSACKLEIETYEKDNCELCKKNIPFVKPGSREQK</sequence>
<evidence type="ECO:0000255" key="1">
    <source>
        <dbReference type="HAMAP-Rule" id="MF_01208"/>
    </source>
</evidence>
<comment type="function">
    <text evidence="1">Catalyzes the transfer of a ribosyl phosphate group from 5-phosphoribose 1-diphosphate to orotate, leading to the formation of orotidine monophosphate (OMP).</text>
</comment>
<comment type="catalytic activity">
    <reaction evidence="1">
        <text>orotidine 5'-phosphate + diphosphate = orotate + 5-phospho-alpha-D-ribose 1-diphosphate</text>
        <dbReference type="Rhea" id="RHEA:10380"/>
        <dbReference type="ChEBI" id="CHEBI:30839"/>
        <dbReference type="ChEBI" id="CHEBI:33019"/>
        <dbReference type="ChEBI" id="CHEBI:57538"/>
        <dbReference type="ChEBI" id="CHEBI:58017"/>
        <dbReference type="EC" id="2.4.2.10"/>
    </reaction>
</comment>
<comment type="cofactor">
    <cofactor evidence="1">
        <name>Mg(2+)</name>
        <dbReference type="ChEBI" id="CHEBI:18420"/>
    </cofactor>
</comment>
<comment type="pathway">
    <text evidence="1">Pyrimidine metabolism; UMP biosynthesis via de novo pathway; UMP from orotate: step 1/2.</text>
</comment>
<comment type="subunit">
    <text evidence="1">Homodimer.</text>
</comment>
<comment type="similarity">
    <text evidence="1">Belongs to the purine/pyrimidine phosphoribosyltransferase family. PyrE subfamily.</text>
</comment>
<accession>B1INE1</accession>
<reference key="1">
    <citation type="journal article" date="2007" name="PLoS ONE">
        <title>Analysis of the neurotoxin complex genes in Clostridium botulinum A1-A4 and B1 strains: BoNT/A3, /Ba4 and /B1 clusters are located within plasmids.</title>
        <authorList>
            <person name="Smith T.J."/>
            <person name="Hill K.K."/>
            <person name="Foley B.T."/>
            <person name="Detter J.C."/>
            <person name="Munk A.C."/>
            <person name="Bruce D.C."/>
            <person name="Doggett N.A."/>
            <person name="Smith L.A."/>
            <person name="Marks J.D."/>
            <person name="Xie G."/>
            <person name="Brettin T.S."/>
        </authorList>
    </citation>
    <scope>NUCLEOTIDE SEQUENCE [LARGE SCALE GENOMIC DNA]</scope>
    <source>
        <strain>Okra / Type B1</strain>
    </source>
</reference>
<protein>
    <recommendedName>
        <fullName evidence="1">Orotate phosphoribosyltransferase</fullName>
        <shortName evidence="1">OPRT</shortName>
        <shortName evidence="1">OPRTase</shortName>
        <ecNumber evidence="1">2.4.2.10</ecNumber>
    </recommendedName>
</protein>
<feature type="chain" id="PRO_1000138779" description="Orotate phosphoribosyltransferase">
    <location>
        <begin position="1"/>
        <end position="191"/>
    </location>
</feature>
<feature type="binding site" evidence="1">
    <location>
        <begin position="114"/>
        <end position="122"/>
    </location>
    <ligand>
        <name>5-phospho-alpha-D-ribose 1-diphosphate</name>
        <dbReference type="ChEBI" id="CHEBI:58017"/>
    </ligand>
</feature>
<feature type="binding site" evidence="1">
    <location>
        <position position="118"/>
    </location>
    <ligand>
        <name>orotate</name>
        <dbReference type="ChEBI" id="CHEBI:30839"/>
    </ligand>
</feature>
<feature type="binding site" evidence="1">
    <location>
        <position position="146"/>
    </location>
    <ligand>
        <name>orotate</name>
        <dbReference type="ChEBI" id="CHEBI:30839"/>
    </ligand>
</feature>
<name>PYRE_CLOBK</name>
<keyword id="KW-0328">Glycosyltransferase</keyword>
<keyword id="KW-0460">Magnesium</keyword>
<keyword id="KW-0665">Pyrimidine biosynthesis</keyword>
<keyword id="KW-0808">Transferase</keyword>
<organism>
    <name type="scientific">Clostridium botulinum (strain Okra / Type B1)</name>
    <dbReference type="NCBI Taxonomy" id="498213"/>
    <lineage>
        <taxon>Bacteria</taxon>
        <taxon>Bacillati</taxon>
        <taxon>Bacillota</taxon>
        <taxon>Clostridia</taxon>
        <taxon>Eubacteriales</taxon>
        <taxon>Clostridiaceae</taxon>
        <taxon>Clostridium</taxon>
    </lineage>
</organism>
<dbReference type="EC" id="2.4.2.10" evidence="1"/>
<dbReference type="EMBL" id="CP000939">
    <property type="protein sequence ID" value="ACA44112.1"/>
    <property type="molecule type" value="Genomic_DNA"/>
</dbReference>
<dbReference type="RefSeq" id="WP_003361660.1">
    <property type="nucleotide sequence ID" value="NC_010516.1"/>
</dbReference>
<dbReference type="SMR" id="B1INE1"/>
<dbReference type="GeneID" id="5186878"/>
<dbReference type="KEGG" id="cbb:CLD_1296"/>
<dbReference type="HOGENOM" id="CLU_074878_3_0_9"/>
<dbReference type="UniPathway" id="UPA00070">
    <property type="reaction ID" value="UER00119"/>
</dbReference>
<dbReference type="Proteomes" id="UP000008541">
    <property type="component" value="Chromosome"/>
</dbReference>
<dbReference type="GO" id="GO:0000287">
    <property type="term" value="F:magnesium ion binding"/>
    <property type="evidence" value="ECO:0007669"/>
    <property type="project" value="UniProtKB-UniRule"/>
</dbReference>
<dbReference type="GO" id="GO:0004588">
    <property type="term" value="F:orotate phosphoribosyltransferase activity"/>
    <property type="evidence" value="ECO:0007669"/>
    <property type="project" value="UniProtKB-UniRule"/>
</dbReference>
<dbReference type="GO" id="GO:0044205">
    <property type="term" value="P:'de novo' UMP biosynthetic process"/>
    <property type="evidence" value="ECO:0007669"/>
    <property type="project" value="UniProtKB-UniRule"/>
</dbReference>
<dbReference type="GO" id="GO:0019856">
    <property type="term" value="P:pyrimidine nucleobase biosynthetic process"/>
    <property type="evidence" value="ECO:0007669"/>
    <property type="project" value="InterPro"/>
</dbReference>
<dbReference type="CDD" id="cd06223">
    <property type="entry name" value="PRTases_typeI"/>
    <property type="match status" value="1"/>
</dbReference>
<dbReference type="Gene3D" id="3.40.50.2020">
    <property type="match status" value="1"/>
</dbReference>
<dbReference type="HAMAP" id="MF_01208">
    <property type="entry name" value="PyrE"/>
    <property type="match status" value="1"/>
</dbReference>
<dbReference type="InterPro" id="IPR023031">
    <property type="entry name" value="OPRT"/>
</dbReference>
<dbReference type="InterPro" id="IPR006273">
    <property type="entry name" value="Orotate_PRibTrfase_bac"/>
</dbReference>
<dbReference type="InterPro" id="IPR000836">
    <property type="entry name" value="PRibTrfase_dom"/>
</dbReference>
<dbReference type="InterPro" id="IPR029057">
    <property type="entry name" value="PRTase-like"/>
</dbReference>
<dbReference type="NCBIfam" id="TIGR01367">
    <property type="entry name" value="pyrE_Therm"/>
    <property type="match status" value="1"/>
</dbReference>
<dbReference type="PANTHER" id="PTHR19278">
    <property type="entry name" value="OROTATE PHOSPHORIBOSYLTRANSFERASE"/>
    <property type="match status" value="1"/>
</dbReference>
<dbReference type="PANTHER" id="PTHR19278:SF9">
    <property type="entry name" value="URIDINE 5'-MONOPHOSPHATE SYNTHASE"/>
    <property type="match status" value="1"/>
</dbReference>
<dbReference type="Pfam" id="PF00156">
    <property type="entry name" value="Pribosyltran"/>
    <property type="match status" value="1"/>
</dbReference>
<dbReference type="SUPFAM" id="SSF53271">
    <property type="entry name" value="PRTase-like"/>
    <property type="match status" value="1"/>
</dbReference>